<organism>
    <name type="scientific">Vibrio parahaemolyticus serotype O3:K6 (strain RIMD 2210633)</name>
    <dbReference type="NCBI Taxonomy" id="223926"/>
    <lineage>
        <taxon>Bacteria</taxon>
        <taxon>Pseudomonadati</taxon>
        <taxon>Pseudomonadota</taxon>
        <taxon>Gammaproteobacteria</taxon>
        <taxon>Vibrionales</taxon>
        <taxon>Vibrionaceae</taxon>
        <taxon>Vibrio</taxon>
    </lineage>
</organism>
<dbReference type="EC" id="4.1.99.1" evidence="1"/>
<dbReference type="EMBL" id="BA000032">
    <property type="protein sequence ID" value="BAC61535.1"/>
    <property type="molecule type" value="Genomic_DNA"/>
</dbReference>
<dbReference type="RefSeq" id="NP_799702.1">
    <property type="nucleotide sequence ID" value="NC_004605.1"/>
</dbReference>
<dbReference type="RefSeq" id="WP_005479941.1">
    <property type="nucleotide sequence ID" value="NC_004605.1"/>
</dbReference>
<dbReference type="SMR" id="Q87JQ6"/>
<dbReference type="GeneID" id="1190879"/>
<dbReference type="KEGG" id="vpa:VPA0192"/>
<dbReference type="PATRIC" id="fig|223926.6.peg.3147"/>
<dbReference type="eggNOG" id="COG3033">
    <property type="taxonomic scope" value="Bacteria"/>
</dbReference>
<dbReference type="HOGENOM" id="CLU_047223_0_0_6"/>
<dbReference type="UniPathway" id="UPA00332">
    <property type="reaction ID" value="UER00452"/>
</dbReference>
<dbReference type="Proteomes" id="UP000002493">
    <property type="component" value="Chromosome 2"/>
</dbReference>
<dbReference type="GO" id="GO:0009034">
    <property type="term" value="F:tryptophanase activity"/>
    <property type="evidence" value="ECO:0007669"/>
    <property type="project" value="UniProtKB-UniRule"/>
</dbReference>
<dbReference type="CDD" id="cd00617">
    <property type="entry name" value="Tnase_like"/>
    <property type="match status" value="1"/>
</dbReference>
<dbReference type="Gene3D" id="3.90.1150.10">
    <property type="entry name" value="Aspartate Aminotransferase, domain 1"/>
    <property type="match status" value="1"/>
</dbReference>
<dbReference type="Gene3D" id="3.40.640.10">
    <property type="entry name" value="Type I PLP-dependent aspartate aminotransferase-like (Major domain)"/>
    <property type="match status" value="1"/>
</dbReference>
<dbReference type="HAMAP" id="MF_00544">
    <property type="entry name" value="Tryptophanase"/>
    <property type="match status" value="1"/>
</dbReference>
<dbReference type="InterPro" id="IPR001597">
    <property type="entry name" value="ArAA_b-elim_lyase/Thr_aldolase"/>
</dbReference>
<dbReference type="InterPro" id="IPR011166">
    <property type="entry name" value="Beta-eliminating_lyase"/>
</dbReference>
<dbReference type="InterPro" id="IPR015424">
    <property type="entry name" value="PyrdxlP-dep_Trfase"/>
</dbReference>
<dbReference type="InterPro" id="IPR015421">
    <property type="entry name" value="PyrdxlP-dep_Trfase_major"/>
</dbReference>
<dbReference type="InterPro" id="IPR015422">
    <property type="entry name" value="PyrdxlP-dep_Trfase_small"/>
</dbReference>
<dbReference type="InterPro" id="IPR013440">
    <property type="entry name" value="TNase"/>
</dbReference>
<dbReference type="InterPro" id="IPR018176">
    <property type="entry name" value="Tryptophanase_CS"/>
</dbReference>
<dbReference type="NCBIfam" id="NF009709">
    <property type="entry name" value="PRK13238.1"/>
    <property type="match status" value="1"/>
</dbReference>
<dbReference type="PANTHER" id="PTHR32325">
    <property type="entry name" value="BETA-ELIMINATING LYASE-LIKE PROTEIN-RELATED"/>
    <property type="match status" value="1"/>
</dbReference>
<dbReference type="PANTHER" id="PTHR32325:SF4">
    <property type="entry name" value="TRYPTOPHANASE"/>
    <property type="match status" value="1"/>
</dbReference>
<dbReference type="Pfam" id="PF01212">
    <property type="entry name" value="Beta_elim_lyase"/>
    <property type="match status" value="1"/>
</dbReference>
<dbReference type="PIRSF" id="PIRSF001386">
    <property type="entry name" value="Trpase"/>
    <property type="match status" value="1"/>
</dbReference>
<dbReference type="SUPFAM" id="SSF53383">
    <property type="entry name" value="PLP-dependent transferases"/>
    <property type="match status" value="1"/>
</dbReference>
<dbReference type="PROSITE" id="PS00853">
    <property type="entry name" value="BETA_ELIM_LYASE"/>
    <property type="match status" value="1"/>
</dbReference>
<reference key="1">
    <citation type="journal article" date="2003" name="Lancet">
        <title>Genome sequence of Vibrio parahaemolyticus: a pathogenic mechanism distinct from that of V. cholerae.</title>
        <authorList>
            <person name="Makino K."/>
            <person name="Oshima K."/>
            <person name="Kurokawa K."/>
            <person name="Yokoyama K."/>
            <person name="Uda T."/>
            <person name="Tagomori K."/>
            <person name="Iijima Y."/>
            <person name="Najima M."/>
            <person name="Nakano M."/>
            <person name="Yamashita A."/>
            <person name="Kubota Y."/>
            <person name="Kimura S."/>
            <person name="Yasunaga T."/>
            <person name="Honda T."/>
            <person name="Shinagawa H."/>
            <person name="Hattori M."/>
            <person name="Iida T."/>
        </authorList>
    </citation>
    <scope>NUCLEOTIDE SEQUENCE [LARGE SCALE GENOMIC DNA]</scope>
    <source>
        <strain>RIMD 2210633</strain>
    </source>
</reference>
<gene>
    <name evidence="1" type="primary">tnaA</name>
    <name type="ordered locus">VPA0192</name>
</gene>
<comment type="catalytic activity">
    <reaction evidence="1">
        <text>L-tryptophan + H2O = indole + pyruvate + NH4(+)</text>
        <dbReference type="Rhea" id="RHEA:19553"/>
        <dbReference type="ChEBI" id="CHEBI:15361"/>
        <dbReference type="ChEBI" id="CHEBI:15377"/>
        <dbReference type="ChEBI" id="CHEBI:16881"/>
        <dbReference type="ChEBI" id="CHEBI:28938"/>
        <dbReference type="ChEBI" id="CHEBI:57912"/>
        <dbReference type="EC" id="4.1.99.1"/>
    </reaction>
</comment>
<comment type="cofactor">
    <cofactor evidence="1">
        <name>pyridoxal 5'-phosphate</name>
        <dbReference type="ChEBI" id="CHEBI:597326"/>
    </cofactor>
</comment>
<comment type="pathway">
    <text evidence="1">Amino-acid degradation; L-tryptophan degradation via pyruvate pathway; indole and pyruvate from L-tryptophan: step 1/1.</text>
</comment>
<comment type="subunit">
    <text evidence="1">Homotetramer.</text>
</comment>
<comment type="similarity">
    <text evidence="1">Belongs to the beta-eliminating lyase family.</text>
</comment>
<name>TNAA_VIBPA</name>
<protein>
    <recommendedName>
        <fullName evidence="1">Tryptophanase</fullName>
        <ecNumber evidence="1">4.1.99.1</ecNumber>
    </recommendedName>
    <alternativeName>
        <fullName evidence="1">L-tryptophan indole-lyase</fullName>
        <shortName evidence="1">TNase</shortName>
    </alternativeName>
</protein>
<sequence>MKRIPEPFRIKMVEPIKMTTLADREIALKEAGYNPFLLRSDDVYIDLLTDSGTGAMSDNQWAGIMLGDESYAGSRNYYNLCSAVEHFFGYKLTVPAHQGRGAEQILFPALIERMRQVRGGETPVFISNYHFDTTAGHIELNGGKAINVVTEEAFDTTTPYDWKGNFDLNKLVETIEEHGSKNICAIITTVTCNSSGGQPVSMENMRSVYEIATKYDIPVVIDSARYCENAYFIKQREEGYADKSILEIIREMYQYGDMLTMSAKKDPMVNIGGMCCIRDHQELFQAVQTRCVPMEGFVTYGGMAGRDMEALARGLYEGADEDFLHYRISQVQYLGERLREGGIPIQYPTGGHAVFVDAAKILPHIPADQFPAQALCNALYLEAGIRAVEIGSLLLGRDPETGEQKASELELMRLTIPRRVYTNDHMDYIADALIELKNRAHELKGLMFEYEPPVLRHFTARFREID</sequence>
<evidence type="ECO:0000255" key="1">
    <source>
        <dbReference type="HAMAP-Rule" id="MF_00544"/>
    </source>
</evidence>
<keyword id="KW-0456">Lyase</keyword>
<keyword id="KW-0663">Pyridoxal phosphate</keyword>
<keyword id="KW-0823">Tryptophan catabolism</keyword>
<proteinExistence type="inferred from homology"/>
<feature type="chain" id="PRO_0000195626" description="Tryptophanase">
    <location>
        <begin position="1"/>
        <end position="466"/>
    </location>
</feature>
<feature type="modified residue" description="N6-(pyridoxal phosphate)lysine" evidence="1">
    <location>
        <position position="265"/>
    </location>
</feature>
<accession>Q87JQ6</accession>